<dbReference type="EC" id="4.1.1.48" evidence="1"/>
<dbReference type="EMBL" id="CP000560">
    <property type="protein sequence ID" value="ABS74444.1"/>
    <property type="molecule type" value="Genomic_DNA"/>
</dbReference>
<dbReference type="RefSeq" id="WP_012117859.1">
    <property type="nucleotide sequence ID" value="NC_009725.2"/>
</dbReference>
<dbReference type="SMR" id="A7Z618"/>
<dbReference type="GeneID" id="93081217"/>
<dbReference type="KEGG" id="bay:RBAM_020820"/>
<dbReference type="HOGENOM" id="CLU_034247_2_0_9"/>
<dbReference type="UniPathway" id="UPA00035">
    <property type="reaction ID" value="UER00043"/>
</dbReference>
<dbReference type="Proteomes" id="UP000001120">
    <property type="component" value="Chromosome"/>
</dbReference>
<dbReference type="GO" id="GO:0004425">
    <property type="term" value="F:indole-3-glycerol-phosphate synthase activity"/>
    <property type="evidence" value="ECO:0007669"/>
    <property type="project" value="UniProtKB-UniRule"/>
</dbReference>
<dbReference type="GO" id="GO:0004640">
    <property type="term" value="F:phosphoribosylanthranilate isomerase activity"/>
    <property type="evidence" value="ECO:0007669"/>
    <property type="project" value="TreeGrafter"/>
</dbReference>
<dbReference type="GO" id="GO:0000162">
    <property type="term" value="P:L-tryptophan biosynthetic process"/>
    <property type="evidence" value="ECO:0007669"/>
    <property type="project" value="UniProtKB-UniRule"/>
</dbReference>
<dbReference type="CDD" id="cd00331">
    <property type="entry name" value="IGPS"/>
    <property type="match status" value="1"/>
</dbReference>
<dbReference type="FunFam" id="3.20.20.70:FF:000024">
    <property type="entry name" value="Indole-3-glycerol phosphate synthase"/>
    <property type="match status" value="1"/>
</dbReference>
<dbReference type="Gene3D" id="3.20.20.70">
    <property type="entry name" value="Aldolase class I"/>
    <property type="match status" value="1"/>
</dbReference>
<dbReference type="HAMAP" id="MF_00134_B">
    <property type="entry name" value="IGPS_B"/>
    <property type="match status" value="1"/>
</dbReference>
<dbReference type="InterPro" id="IPR013785">
    <property type="entry name" value="Aldolase_TIM"/>
</dbReference>
<dbReference type="InterPro" id="IPR045186">
    <property type="entry name" value="Indole-3-glycerol_P_synth"/>
</dbReference>
<dbReference type="InterPro" id="IPR013798">
    <property type="entry name" value="Indole-3-glycerol_P_synth_dom"/>
</dbReference>
<dbReference type="InterPro" id="IPR001468">
    <property type="entry name" value="Indole-3-GlycerolPSynthase_CS"/>
</dbReference>
<dbReference type="InterPro" id="IPR011060">
    <property type="entry name" value="RibuloseP-bd_barrel"/>
</dbReference>
<dbReference type="NCBIfam" id="NF001375">
    <property type="entry name" value="PRK00278.2-2"/>
    <property type="match status" value="1"/>
</dbReference>
<dbReference type="NCBIfam" id="NF001377">
    <property type="entry name" value="PRK00278.2-4"/>
    <property type="match status" value="1"/>
</dbReference>
<dbReference type="PANTHER" id="PTHR22854:SF2">
    <property type="entry name" value="INDOLE-3-GLYCEROL-PHOSPHATE SYNTHASE"/>
    <property type="match status" value="1"/>
</dbReference>
<dbReference type="PANTHER" id="PTHR22854">
    <property type="entry name" value="TRYPTOPHAN BIOSYNTHESIS PROTEIN"/>
    <property type="match status" value="1"/>
</dbReference>
<dbReference type="Pfam" id="PF00218">
    <property type="entry name" value="IGPS"/>
    <property type="match status" value="1"/>
</dbReference>
<dbReference type="SUPFAM" id="SSF51366">
    <property type="entry name" value="Ribulose-phoshate binding barrel"/>
    <property type="match status" value="1"/>
</dbReference>
<dbReference type="PROSITE" id="PS00614">
    <property type="entry name" value="IGPS"/>
    <property type="match status" value="1"/>
</dbReference>
<keyword id="KW-0028">Amino-acid biosynthesis</keyword>
<keyword id="KW-0057">Aromatic amino acid biosynthesis</keyword>
<keyword id="KW-0210">Decarboxylase</keyword>
<keyword id="KW-0456">Lyase</keyword>
<keyword id="KW-0822">Tryptophan biosynthesis</keyword>
<organism>
    <name type="scientific">Bacillus velezensis (strain DSM 23117 / BGSC 10A6 / LMG 26770 / FZB42)</name>
    <name type="common">Bacillus amyloliquefaciens subsp. plantarum</name>
    <dbReference type="NCBI Taxonomy" id="326423"/>
    <lineage>
        <taxon>Bacteria</taxon>
        <taxon>Bacillati</taxon>
        <taxon>Bacillota</taxon>
        <taxon>Bacilli</taxon>
        <taxon>Bacillales</taxon>
        <taxon>Bacillaceae</taxon>
        <taxon>Bacillus</taxon>
        <taxon>Bacillus amyloliquefaciens group</taxon>
    </lineage>
</organism>
<accession>A7Z618</accession>
<proteinExistence type="inferred from homology"/>
<protein>
    <recommendedName>
        <fullName evidence="1">Indole-3-glycerol phosphate synthase</fullName>
        <shortName evidence="1">IGPS</shortName>
        <ecNumber evidence="1">4.1.1.48</ecNumber>
    </recommendedName>
</protein>
<evidence type="ECO:0000255" key="1">
    <source>
        <dbReference type="HAMAP-Rule" id="MF_00134"/>
    </source>
</evidence>
<name>TRPC_BACVZ</name>
<comment type="catalytic activity">
    <reaction evidence="1">
        <text>1-(2-carboxyphenylamino)-1-deoxy-D-ribulose 5-phosphate + H(+) = (1S,2R)-1-C-(indol-3-yl)glycerol 3-phosphate + CO2 + H2O</text>
        <dbReference type="Rhea" id="RHEA:23476"/>
        <dbReference type="ChEBI" id="CHEBI:15377"/>
        <dbReference type="ChEBI" id="CHEBI:15378"/>
        <dbReference type="ChEBI" id="CHEBI:16526"/>
        <dbReference type="ChEBI" id="CHEBI:58613"/>
        <dbReference type="ChEBI" id="CHEBI:58866"/>
        <dbReference type="EC" id="4.1.1.48"/>
    </reaction>
</comment>
<comment type="pathway">
    <text evidence="1">Amino-acid biosynthesis; L-tryptophan biosynthesis; L-tryptophan from chorismate: step 4/5.</text>
</comment>
<comment type="similarity">
    <text evidence="1">Belongs to the TrpC family.</text>
</comment>
<reference key="1">
    <citation type="journal article" date="2007" name="Nat. Biotechnol.">
        <title>Comparative analysis of the complete genome sequence of the plant growth-promoting bacterium Bacillus amyloliquefaciens FZB42.</title>
        <authorList>
            <person name="Chen X.H."/>
            <person name="Koumoutsi A."/>
            <person name="Scholz R."/>
            <person name="Eisenreich A."/>
            <person name="Schneider K."/>
            <person name="Heinemeyer I."/>
            <person name="Morgenstern B."/>
            <person name="Voss B."/>
            <person name="Hess W.R."/>
            <person name="Reva O."/>
            <person name="Junge H."/>
            <person name="Voigt B."/>
            <person name="Jungblut P.R."/>
            <person name="Vater J."/>
            <person name="Suessmuth R."/>
            <person name="Liesegang H."/>
            <person name="Strittmatter A."/>
            <person name="Gottschalk G."/>
            <person name="Borriss R."/>
        </authorList>
    </citation>
    <scope>NUCLEOTIDE SEQUENCE [LARGE SCALE GENOMIC DNA]</scope>
    <source>
        <strain>DSM 23117 / BGSC 10A6 / LMG 26770 / FZB42</strain>
    </source>
</reference>
<gene>
    <name evidence="1" type="primary">trpC</name>
    <name type="ordered locus">RBAM_020820</name>
</gene>
<sequence length="250" mass="27957">MLDQIIQQKKEEIKSIVLPETCQIERRSFKKALQNPNRFIGLIAEVKKASPSKGLIKEHFVPETIAADYEAAKADALSVLTDTRFFQGRNQFLTDVKQTVSLPVLRKDFIIDSLQVEESFRIGADAILLIGEALEPSELHELYLEAREKGMDVLVEVHDETVLERILQVFQPDILGINNRDLKTFRTSVSQTEKIAQLVPDGCLLVSESGIGSLADLQFVNKHGAQAVLVGESLMREDSQQKAIRGLFGE</sequence>
<feature type="chain" id="PRO_1000018435" description="Indole-3-glycerol phosphate synthase">
    <location>
        <begin position="1"/>
        <end position="250"/>
    </location>
</feature>